<evidence type="ECO:0000255" key="1">
    <source>
        <dbReference type="HAMAP-Rule" id="MF_01408"/>
    </source>
</evidence>
<evidence type="ECO:0000255" key="2">
    <source>
        <dbReference type="PROSITE-ProRule" id="PRU00661"/>
    </source>
</evidence>
<proteinExistence type="inferred from homology"/>
<comment type="function">
    <text evidence="1">Catalyzes the reductive methylation of 2'-deoxyuridine-5'-monophosphate (dUMP) to 2'-deoxythymidine-5'-monophosphate (dTMP) while utilizing 5,10-methylenetetrahydrofolate (mTHF) as the methyl donor, and NADPH and FADH(2) as the reductant.</text>
</comment>
<comment type="catalytic activity">
    <reaction evidence="1">
        <text>dUMP + (6R)-5,10-methylene-5,6,7,8-tetrahydrofolate + NADPH + H(+) = dTMP + (6S)-5,6,7,8-tetrahydrofolate + NADP(+)</text>
        <dbReference type="Rhea" id="RHEA:29043"/>
        <dbReference type="ChEBI" id="CHEBI:15378"/>
        <dbReference type="ChEBI" id="CHEBI:15636"/>
        <dbReference type="ChEBI" id="CHEBI:57453"/>
        <dbReference type="ChEBI" id="CHEBI:57783"/>
        <dbReference type="ChEBI" id="CHEBI:58349"/>
        <dbReference type="ChEBI" id="CHEBI:63528"/>
        <dbReference type="ChEBI" id="CHEBI:246422"/>
        <dbReference type="EC" id="2.1.1.148"/>
    </reaction>
</comment>
<comment type="cofactor">
    <cofactor evidence="1">
        <name>FAD</name>
        <dbReference type="ChEBI" id="CHEBI:57692"/>
    </cofactor>
    <text evidence="1">Binds 4 FAD per tetramer. Each FAD binding site is formed by three monomers.</text>
</comment>
<comment type="pathway">
    <text evidence="1">Pyrimidine metabolism; dTTP biosynthesis.</text>
</comment>
<comment type="subunit">
    <text evidence="1">Homotetramer.</text>
</comment>
<comment type="similarity">
    <text evidence="1">Belongs to the thymidylate synthase ThyX family.</text>
</comment>
<protein>
    <recommendedName>
        <fullName evidence="1">Flavin-dependent thymidylate synthase</fullName>
        <shortName evidence="1">FDTS</shortName>
        <ecNumber evidence="1">2.1.1.148</ecNumber>
    </recommendedName>
    <alternativeName>
        <fullName evidence="1">FAD-dependent thymidylate synthase</fullName>
    </alternativeName>
    <alternativeName>
        <fullName evidence="1">Thymidylate synthase ThyX</fullName>
        <shortName evidence="1">TS</shortName>
        <shortName evidence="1">TSase</shortName>
    </alternativeName>
</protein>
<sequence length="254" mass="27996">MAETAPLRVQLIARTEFTVPPDVPWETDAEGGAALVEFAGRACYQSWSKPNPRTATNASYLRHIIDVGHLSVLEHASVSFYITGISRSCTHELIRHRHFSYSQLSQRYVPENDSQVVVPPGIEGDAELEGLFTAAADASRAAYAELLAKLEAKLMGDEPREGRATLRRKQARQAARSVLPNATETRIVVTGNYRAWRHFIAMRASEHADLEIRRLAIACLRELVAVAPAVFADFEIYPLADGTEVATTPLVTEA</sequence>
<dbReference type="EC" id="2.1.1.148" evidence="1"/>
<dbReference type="EMBL" id="CP000384">
    <property type="protein sequence ID" value="ABG08223.1"/>
    <property type="molecule type" value="Genomic_DNA"/>
</dbReference>
<dbReference type="SMR" id="Q1BA61"/>
<dbReference type="KEGG" id="mmc:Mmcs_2115"/>
<dbReference type="HOGENOM" id="CLU_077585_1_0_11"/>
<dbReference type="BioCyc" id="MSP164756:G1G6O-2161-MONOMER"/>
<dbReference type="UniPathway" id="UPA00575"/>
<dbReference type="GO" id="GO:0050660">
    <property type="term" value="F:flavin adenine dinucleotide binding"/>
    <property type="evidence" value="ECO:0007669"/>
    <property type="project" value="InterPro"/>
</dbReference>
<dbReference type="GO" id="GO:0070402">
    <property type="term" value="F:NADPH binding"/>
    <property type="evidence" value="ECO:0007669"/>
    <property type="project" value="TreeGrafter"/>
</dbReference>
<dbReference type="GO" id="GO:0050797">
    <property type="term" value="F:thymidylate synthase (FAD) activity"/>
    <property type="evidence" value="ECO:0007669"/>
    <property type="project" value="UniProtKB-UniRule"/>
</dbReference>
<dbReference type="GO" id="GO:0004799">
    <property type="term" value="F:thymidylate synthase activity"/>
    <property type="evidence" value="ECO:0007669"/>
    <property type="project" value="TreeGrafter"/>
</dbReference>
<dbReference type="GO" id="GO:0006231">
    <property type="term" value="P:dTMP biosynthetic process"/>
    <property type="evidence" value="ECO:0007669"/>
    <property type="project" value="UniProtKB-UniRule"/>
</dbReference>
<dbReference type="GO" id="GO:0006235">
    <property type="term" value="P:dTTP biosynthetic process"/>
    <property type="evidence" value="ECO:0007669"/>
    <property type="project" value="UniProtKB-UniRule"/>
</dbReference>
<dbReference type="GO" id="GO:0032259">
    <property type="term" value="P:methylation"/>
    <property type="evidence" value="ECO:0007669"/>
    <property type="project" value="UniProtKB-KW"/>
</dbReference>
<dbReference type="CDD" id="cd20175">
    <property type="entry name" value="ThyX"/>
    <property type="match status" value="1"/>
</dbReference>
<dbReference type="Gene3D" id="3.30.70.3180">
    <property type="match status" value="2"/>
</dbReference>
<dbReference type="Gene3D" id="6.10.140.450">
    <property type="match status" value="1"/>
</dbReference>
<dbReference type="HAMAP" id="MF_01408">
    <property type="entry name" value="ThyX"/>
    <property type="match status" value="1"/>
</dbReference>
<dbReference type="InterPro" id="IPR003669">
    <property type="entry name" value="Thymidylate_synthase_ThyX"/>
</dbReference>
<dbReference type="InterPro" id="IPR036098">
    <property type="entry name" value="Thymidylate_synthase_ThyX_sf"/>
</dbReference>
<dbReference type="NCBIfam" id="TIGR02170">
    <property type="entry name" value="thyX"/>
    <property type="match status" value="1"/>
</dbReference>
<dbReference type="PANTHER" id="PTHR34934">
    <property type="entry name" value="FLAVIN-DEPENDENT THYMIDYLATE SYNTHASE"/>
    <property type="match status" value="1"/>
</dbReference>
<dbReference type="PANTHER" id="PTHR34934:SF1">
    <property type="entry name" value="FLAVIN-DEPENDENT THYMIDYLATE SYNTHASE"/>
    <property type="match status" value="1"/>
</dbReference>
<dbReference type="Pfam" id="PF02511">
    <property type="entry name" value="Thy1"/>
    <property type="match status" value="1"/>
</dbReference>
<dbReference type="SUPFAM" id="SSF69796">
    <property type="entry name" value="Thymidylate synthase-complementing protein Thy1"/>
    <property type="match status" value="1"/>
</dbReference>
<dbReference type="PROSITE" id="PS51331">
    <property type="entry name" value="THYX"/>
    <property type="match status" value="1"/>
</dbReference>
<gene>
    <name evidence="1" type="primary">thyX</name>
    <name type="ordered locus">Mmcs_2115</name>
</gene>
<keyword id="KW-0274">FAD</keyword>
<keyword id="KW-0285">Flavoprotein</keyword>
<keyword id="KW-0489">Methyltransferase</keyword>
<keyword id="KW-0521">NADP</keyword>
<keyword id="KW-0545">Nucleotide biosynthesis</keyword>
<keyword id="KW-0808">Transferase</keyword>
<organism>
    <name type="scientific">Mycobacterium sp. (strain MCS)</name>
    <dbReference type="NCBI Taxonomy" id="164756"/>
    <lineage>
        <taxon>Bacteria</taxon>
        <taxon>Bacillati</taxon>
        <taxon>Actinomycetota</taxon>
        <taxon>Actinomycetes</taxon>
        <taxon>Mycobacteriales</taxon>
        <taxon>Mycobacteriaceae</taxon>
        <taxon>Mycobacterium</taxon>
    </lineage>
</organism>
<feature type="chain" id="PRO_1000184598" description="Flavin-dependent thymidylate synthase">
    <location>
        <begin position="1"/>
        <end position="254"/>
    </location>
</feature>
<feature type="domain" description="ThyX" evidence="2">
    <location>
        <begin position="7"/>
        <end position="237"/>
    </location>
</feature>
<feature type="short sequence motif" description="ThyX motif" evidence="1">
    <location>
        <begin position="95"/>
        <end position="105"/>
    </location>
</feature>
<feature type="active site" description="Involved in ionization of N3 of dUMP, leading to its activation" evidence="1">
    <location>
        <position position="203"/>
    </location>
</feature>
<feature type="binding site" evidence="1">
    <location>
        <position position="71"/>
    </location>
    <ligand>
        <name>FAD</name>
        <dbReference type="ChEBI" id="CHEBI:57692"/>
        <note>ligand shared between neighboring subunits</note>
    </ligand>
</feature>
<feature type="binding site" evidence="1">
    <location>
        <begin position="92"/>
        <end position="95"/>
    </location>
    <ligand>
        <name>dUMP</name>
        <dbReference type="ChEBI" id="CHEBI:246422"/>
        <note>ligand shared between dimeric partners</note>
    </ligand>
</feature>
<feature type="binding site" evidence="1">
    <location>
        <begin position="95"/>
        <end position="97"/>
    </location>
    <ligand>
        <name>FAD</name>
        <dbReference type="ChEBI" id="CHEBI:57692"/>
        <note>ligand shared between neighboring subunits</note>
    </ligand>
</feature>
<feature type="binding site" description="in other chain" evidence="1">
    <location>
        <begin position="103"/>
        <end position="107"/>
    </location>
    <ligand>
        <name>dUMP</name>
        <dbReference type="ChEBI" id="CHEBI:246422"/>
        <note>ligand shared between dimeric partners</note>
    </ligand>
</feature>
<feature type="binding site" evidence="1">
    <location>
        <position position="103"/>
    </location>
    <ligand>
        <name>FAD</name>
        <dbReference type="ChEBI" id="CHEBI:57692"/>
        <note>ligand shared between neighboring subunits</note>
    </ligand>
</feature>
<feature type="binding site" description="in other chain" evidence="1">
    <location>
        <position position="176"/>
    </location>
    <ligand>
        <name>dUMP</name>
        <dbReference type="ChEBI" id="CHEBI:246422"/>
        <note>ligand shared between dimeric partners</note>
    </ligand>
</feature>
<feature type="binding site" evidence="1">
    <location>
        <begin position="192"/>
        <end position="194"/>
    </location>
    <ligand>
        <name>FAD</name>
        <dbReference type="ChEBI" id="CHEBI:57692"/>
        <note>ligand shared between neighboring subunits</note>
    </ligand>
</feature>
<feature type="binding site" evidence="1">
    <location>
        <position position="198"/>
    </location>
    <ligand>
        <name>FAD</name>
        <dbReference type="ChEBI" id="CHEBI:57692"/>
        <note>ligand shared between neighboring subunits</note>
    </ligand>
</feature>
<feature type="binding site" evidence="1">
    <location>
        <position position="203"/>
    </location>
    <ligand>
        <name>dUMP</name>
        <dbReference type="ChEBI" id="CHEBI:246422"/>
        <note>ligand shared between dimeric partners</note>
    </ligand>
</feature>
<name>THYX_MYCSS</name>
<reference key="1">
    <citation type="submission" date="2006-06" db="EMBL/GenBank/DDBJ databases">
        <title>Complete sequence of chromosome of Mycobacterium sp. MCS.</title>
        <authorList>
            <consortium name="US DOE Joint Genome Institute"/>
            <person name="Copeland A."/>
            <person name="Lucas S."/>
            <person name="Lapidus A."/>
            <person name="Barry K."/>
            <person name="Detter J.C."/>
            <person name="Glavina del Rio T."/>
            <person name="Hammon N."/>
            <person name="Israni S."/>
            <person name="Dalin E."/>
            <person name="Tice H."/>
            <person name="Pitluck S."/>
            <person name="Martinez M."/>
            <person name="Schmutz J."/>
            <person name="Larimer F."/>
            <person name="Land M."/>
            <person name="Hauser L."/>
            <person name="Kyrpides N."/>
            <person name="Kim E."/>
            <person name="Miller C.D."/>
            <person name="Hughes J.E."/>
            <person name="Anderson A.J."/>
            <person name="Sims R.C."/>
            <person name="Richardson P."/>
        </authorList>
    </citation>
    <scope>NUCLEOTIDE SEQUENCE [LARGE SCALE GENOMIC DNA]</scope>
    <source>
        <strain>MCS</strain>
    </source>
</reference>
<accession>Q1BA61</accession>